<sequence>MKFLNQITNYAKEAVQSAKYIGQGLSVTFDHMRRRPITVQYPYEKLIPSERFRGRIHFEFDKCIACEVCVRVCPINLPVVDWVFNKELKKKELKHYSIDFGVCIFCANCVEYCPTNCLSVTEEYELATYDRHELNYDSVAMGRIPYKVTQDPMVTPIREFAYLPAGVMSGHDLPAGAQRAGERPEAIANTAKSSEN</sequence>
<proteinExistence type="evidence at protein level"/>
<keyword id="KW-0002">3D-structure</keyword>
<keyword id="KW-0004">4Fe-4S</keyword>
<keyword id="KW-0408">Iron</keyword>
<keyword id="KW-0411">Iron-sulfur</keyword>
<keyword id="KW-0472">Membrane</keyword>
<keyword id="KW-0479">Metal-binding</keyword>
<keyword id="KW-0520">NAD</keyword>
<keyword id="KW-0521">NADP</keyword>
<keyword id="KW-0618">Plastoquinone</keyword>
<keyword id="KW-0874">Quinone</keyword>
<keyword id="KW-1185">Reference proteome</keyword>
<keyword id="KW-0677">Repeat</keyword>
<keyword id="KW-0793">Thylakoid</keyword>
<keyword id="KW-1278">Translocase</keyword>
<protein>
    <recommendedName>
        <fullName evidence="1">NAD(P)H-quinone oxidoreductase subunit I</fullName>
        <ecNumber evidence="1">7.1.1.-</ecNumber>
    </recommendedName>
    <alternativeName>
        <fullName evidence="1">NAD(P)H dehydrogenase I subunit I</fullName>
    </alternativeName>
    <alternativeName>
        <fullName evidence="1">NDH-1 subunit I</fullName>
        <shortName evidence="1">NDH-I</shortName>
    </alternativeName>
</protein>
<feature type="chain" id="PRO_0000245687" description="NAD(P)H-quinone oxidoreductase subunit I">
    <location>
        <begin position="1"/>
        <end position="196"/>
    </location>
</feature>
<feature type="domain" description="4Fe-4S ferredoxin-type 1" evidence="1">
    <location>
        <begin position="54"/>
        <end position="83"/>
    </location>
</feature>
<feature type="domain" description="4Fe-4S ferredoxin-type 2" evidence="1">
    <location>
        <begin position="94"/>
        <end position="123"/>
    </location>
</feature>
<feature type="region of interest" description="Disordered" evidence="2">
    <location>
        <begin position="174"/>
        <end position="196"/>
    </location>
</feature>
<feature type="binding site" evidence="1">
    <location>
        <position position="63"/>
    </location>
    <ligand>
        <name>[4Fe-4S] cluster</name>
        <dbReference type="ChEBI" id="CHEBI:49883"/>
        <label>1</label>
    </ligand>
</feature>
<feature type="binding site" evidence="1">
    <location>
        <position position="66"/>
    </location>
    <ligand>
        <name>[4Fe-4S] cluster</name>
        <dbReference type="ChEBI" id="CHEBI:49883"/>
        <label>1</label>
    </ligand>
</feature>
<feature type="binding site" evidence="1">
    <location>
        <position position="69"/>
    </location>
    <ligand>
        <name>[4Fe-4S] cluster</name>
        <dbReference type="ChEBI" id="CHEBI:49883"/>
        <label>1</label>
    </ligand>
</feature>
<feature type="binding site" evidence="1">
    <location>
        <position position="73"/>
    </location>
    <ligand>
        <name>[4Fe-4S] cluster</name>
        <dbReference type="ChEBI" id="CHEBI:49883"/>
        <label>2</label>
    </ligand>
</feature>
<feature type="binding site" evidence="1">
    <location>
        <position position="103"/>
    </location>
    <ligand>
        <name>[4Fe-4S] cluster</name>
        <dbReference type="ChEBI" id="CHEBI:49883"/>
        <label>2</label>
    </ligand>
</feature>
<feature type="binding site" evidence="1">
    <location>
        <position position="106"/>
    </location>
    <ligand>
        <name>[4Fe-4S] cluster</name>
        <dbReference type="ChEBI" id="CHEBI:49883"/>
        <label>2</label>
    </ligand>
</feature>
<feature type="binding site" evidence="1">
    <location>
        <position position="109"/>
    </location>
    <ligand>
        <name>[4Fe-4S] cluster</name>
        <dbReference type="ChEBI" id="CHEBI:49883"/>
        <label>2</label>
    </ligand>
</feature>
<feature type="binding site" evidence="1">
    <location>
        <position position="113"/>
    </location>
    <ligand>
        <name>[4Fe-4S] cluster</name>
        <dbReference type="ChEBI" id="CHEBI:49883"/>
        <label>1</label>
    </ligand>
</feature>
<feature type="helix" evidence="3">
    <location>
        <begin position="4"/>
        <end position="29"/>
    </location>
</feature>
<feature type="strand" evidence="5">
    <location>
        <begin position="32"/>
        <end position="34"/>
    </location>
</feature>
<feature type="helix" evidence="3">
    <location>
        <begin position="41"/>
        <end position="43"/>
    </location>
</feature>
<feature type="strand" evidence="3">
    <location>
        <begin position="55"/>
        <end position="58"/>
    </location>
</feature>
<feature type="helix" evidence="3">
    <location>
        <begin position="60"/>
        <end position="62"/>
    </location>
</feature>
<feature type="helix" evidence="3">
    <location>
        <begin position="68"/>
        <end position="71"/>
    </location>
</feature>
<feature type="strand" evidence="6">
    <location>
        <begin position="73"/>
        <end position="75"/>
    </location>
</feature>
<feature type="strand" evidence="3">
    <location>
        <begin position="79"/>
        <end position="82"/>
    </location>
</feature>
<feature type="turn" evidence="3">
    <location>
        <begin position="86"/>
        <end position="89"/>
    </location>
</feature>
<feature type="strand" evidence="3">
    <location>
        <begin position="93"/>
        <end position="99"/>
    </location>
</feature>
<feature type="turn" evidence="3">
    <location>
        <begin position="100"/>
        <end position="102"/>
    </location>
</feature>
<feature type="helix" evidence="3">
    <location>
        <begin position="108"/>
        <end position="111"/>
    </location>
</feature>
<feature type="strand" evidence="5">
    <location>
        <begin position="114"/>
        <end position="116"/>
    </location>
</feature>
<feature type="strand" evidence="3">
    <location>
        <begin position="118"/>
        <end position="120"/>
    </location>
</feature>
<feature type="strand" evidence="3">
    <location>
        <begin position="128"/>
        <end position="130"/>
    </location>
</feature>
<feature type="helix" evidence="3">
    <location>
        <begin position="131"/>
        <end position="134"/>
    </location>
</feature>
<feature type="strand" evidence="4">
    <location>
        <begin position="135"/>
        <end position="137"/>
    </location>
</feature>
<feature type="turn" evidence="3">
    <location>
        <begin position="138"/>
        <end position="142"/>
    </location>
</feature>
<feature type="helix" evidence="4">
    <location>
        <begin position="148"/>
        <end position="150"/>
    </location>
</feature>
<feature type="turn" evidence="5">
    <location>
        <begin position="160"/>
        <end position="162"/>
    </location>
</feature>
<feature type="strand" evidence="5">
    <location>
        <begin position="170"/>
        <end position="172"/>
    </location>
</feature>
<feature type="strand" evidence="4">
    <location>
        <begin position="179"/>
        <end position="181"/>
    </location>
</feature>
<feature type="helix" evidence="3">
    <location>
        <begin position="184"/>
        <end position="192"/>
    </location>
</feature>
<dbReference type="EC" id="7.1.1.-" evidence="1"/>
<dbReference type="EMBL" id="BA000039">
    <property type="protein sequence ID" value="BAC08219.1"/>
    <property type="molecule type" value="Genomic_DNA"/>
</dbReference>
<dbReference type="RefSeq" id="NP_681457.1">
    <property type="nucleotide sequence ID" value="NC_004113.1"/>
</dbReference>
<dbReference type="RefSeq" id="WP_011056515.1">
    <property type="nucleotide sequence ID" value="NC_004113.1"/>
</dbReference>
<dbReference type="PDB" id="6HUM">
    <property type="method" value="EM"/>
    <property type="resolution" value="3.34 A"/>
    <property type="chains" value="I=1-196"/>
</dbReference>
<dbReference type="PDB" id="6KHI">
    <property type="method" value="EM"/>
    <property type="resolution" value="3.00 A"/>
    <property type="chains" value="I=1-196"/>
</dbReference>
<dbReference type="PDB" id="6KHJ">
    <property type="method" value="EM"/>
    <property type="resolution" value="3.00 A"/>
    <property type="chains" value="I=1-196"/>
</dbReference>
<dbReference type="PDB" id="6L7O">
    <property type="method" value="EM"/>
    <property type="resolution" value="3.20 A"/>
    <property type="chains" value="I=1-196"/>
</dbReference>
<dbReference type="PDB" id="6L7P">
    <property type="method" value="EM"/>
    <property type="resolution" value="3.60 A"/>
    <property type="chains" value="I=1-196"/>
</dbReference>
<dbReference type="PDB" id="6NBQ">
    <property type="method" value="EM"/>
    <property type="resolution" value="3.10 A"/>
    <property type="chains" value="I=1-196"/>
</dbReference>
<dbReference type="PDB" id="6NBX">
    <property type="method" value="EM"/>
    <property type="resolution" value="3.50 A"/>
    <property type="chains" value="I=1-196"/>
</dbReference>
<dbReference type="PDB" id="6NBY">
    <property type="method" value="EM"/>
    <property type="resolution" value="3.10 A"/>
    <property type="chains" value="I=1-196"/>
</dbReference>
<dbReference type="PDB" id="6TJV">
    <property type="method" value="EM"/>
    <property type="resolution" value="3.20 A"/>
    <property type="chains" value="I=1-196"/>
</dbReference>
<dbReference type="PDBsum" id="6HUM"/>
<dbReference type="PDBsum" id="6KHI"/>
<dbReference type="PDBsum" id="6KHJ"/>
<dbReference type="PDBsum" id="6L7O"/>
<dbReference type="PDBsum" id="6L7P"/>
<dbReference type="PDBsum" id="6NBQ"/>
<dbReference type="PDBsum" id="6NBX"/>
<dbReference type="PDBsum" id="6NBY"/>
<dbReference type="PDBsum" id="6TJV"/>
<dbReference type="EMDB" id="EMD-0281"/>
<dbReference type="EMDB" id="EMD-0415"/>
<dbReference type="EMDB" id="EMD-0425"/>
<dbReference type="EMDB" id="EMD-0849"/>
<dbReference type="EMDB" id="EMD-0850"/>
<dbReference type="EMDB" id="EMD-9989"/>
<dbReference type="EMDB" id="EMD-9990"/>
<dbReference type="SMR" id="Q8DL31"/>
<dbReference type="IntAct" id="Q8DL31">
    <property type="interactions" value="1"/>
</dbReference>
<dbReference type="STRING" id="197221.gene:10747258"/>
<dbReference type="TCDB" id="3.D.1.8.2">
    <property type="family name" value="the h+ or na+-translocating nadh dehydrogenase (ndh) family"/>
</dbReference>
<dbReference type="EnsemblBacteria" id="BAC08219">
    <property type="protein sequence ID" value="BAC08219"/>
    <property type="gene ID" value="BAC08219"/>
</dbReference>
<dbReference type="KEGG" id="tel:tlr0668"/>
<dbReference type="PATRIC" id="fig|197221.4.peg.707"/>
<dbReference type="eggNOG" id="COG1143">
    <property type="taxonomic scope" value="Bacteria"/>
</dbReference>
<dbReference type="Proteomes" id="UP000000440">
    <property type="component" value="Chromosome"/>
</dbReference>
<dbReference type="GO" id="GO:0031676">
    <property type="term" value="C:plasma membrane-derived thylakoid membrane"/>
    <property type="evidence" value="ECO:0007669"/>
    <property type="project" value="UniProtKB-SubCell"/>
</dbReference>
<dbReference type="GO" id="GO:0051539">
    <property type="term" value="F:4 iron, 4 sulfur cluster binding"/>
    <property type="evidence" value="ECO:0007669"/>
    <property type="project" value="UniProtKB-KW"/>
</dbReference>
<dbReference type="GO" id="GO:0005506">
    <property type="term" value="F:iron ion binding"/>
    <property type="evidence" value="ECO:0007669"/>
    <property type="project" value="UniProtKB-UniRule"/>
</dbReference>
<dbReference type="GO" id="GO:0008137">
    <property type="term" value="F:NADH dehydrogenase (ubiquinone) activity"/>
    <property type="evidence" value="ECO:0007669"/>
    <property type="project" value="InterPro"/>
</dbReference>
<dbReference type="GO" id="GO:0048038">
    <property type="term" value="F:quinone binding"/>
    <property type="evidence" value="ECO:0007669"/>
    <property type="project" value="UniProtKB-KW"/>
</dbReference>
<dbReference type="GO" id="GO:0019684">
    <property type="term" value="P:photosynthesis, light reaction"/>
    <property type="evidence" value="ECO:0007669"/>
    <property type="project" value="UniProtKB-UniRule"/>
</dbReference>
<dbReference type="Gene3D" id="3.30.70.3270">
    <property type="match status" value="1"/>
</dbReference>
<dbReference type="HAMAP" id="MF_01351">
    <property type="entry name" value="NDH1_NuoI"/>
    <property type="match status" value="1"/>
</dbReference>
<dbReference type="InterPro" id="IPR017896">
    <property type="entry name" value="4Fe4S_Fe-S-bd"/>
</dbReference>
<dbReference type="InterPro" id="IPR017900">
    <property type="entry name" value="4Fe4S_Fe_S_CS"/>
</dbReference>
<dbReference type="InterPro" id="IPR010226">
    <property type="entry name" value="NADH_quinone_OxRdtase_chainI"/>
</dbReference>
<dbReference type="InterPro" id="IPR004497">
    <property type="entry name" value="NDHI"/>
</dbReference>
<dbReference type="NCBIfam" id="TIGR00403">
    <property type="entry name" value="ndhI"/>
    <property type="match status" value="1"/>
</dbReference>
<dbReference type="NCBIfam" id="TIGR01971">
    <property type="entry name" value="NuoI"/>
    <property type="match status" value="1"/>
</dbReference>
<dbReference type="NCBIfam" id="NF004537">
    <property type="entry name" value="PRK05888.1-3"/>
    <property type="match status" value="1"/>
</dbReference>
<dbReference type="PANTHER" id="PTHR47275">
    <property type="entry name" value="NAD(P)H-QUINONE OXIDOREDUCTASE SUBUNIT I, CHLOROPLASTIC"/>
    <property type="match status" value="1"/>
</dbReference>
<dbReference type="PANTHER" id="PTHR47275:SF1">
    <property type="entry name" value="NAD(P)H-QUINONE OXIDOREDUCTASE SUBUNIT I, CHLOROPLASTIC"/>
    <property type="match status" value="1"/>
</dbReference>
<dbReference type="Pfam" id="PF12838">
    <property type="entry name" value="Fer4_7"/>
    <property type="match status" value="1"/>
</dbReference>
<dbReference type="SUPFAM" id="SSF54862">
    <property type="entry name" value="4Fe-4S ferredoxins"/>
    <property type="match status" value="1"/>
</dbReference>
<dbReference type="PROSITE" id="PS00198">
    <property type="entry name" value="4FE4S_FER_1"/>
    <property type="match status" value="2"/>
</dbReference>
<dbReference type="PROSITE" id="PS51379">
    <property type="entry name" value="4FE4S_FER_2"/>
    <property type="match status" value="2"/>
</dbReference>
<reference key="1">
    <citation type="journal article" date="2002" name="DNA Res.">
        <title>Complete genome structure of the thermophilic cyanobacterium Thermosynechococcus elongatus BP-1.</title>
        <authorList>
            <person name="Nakamura Y."/>
            <person name="Kaneko T."/>
            <person name="Sato S."/>
            <person name="Ikeuchi M."/>
            <person name="Katoh H."/>
            <person name="Sasamoto S."/>
            <person name="Watanabe A."/>
            <person name="Iriguchi M."/>
            <person name="Kawashima K."/>
            <person name="Kimura T."/>
            <person name="Kishida Y."/>
            <person name="Kiyokawa C."/>
            <person name="Kohara M."/>
            <person name="Matsumoto M."/>
            <person name="Matsuno A."/>
            <person name="Nakazaki N."/>
            <person name="Shimpo S."/>
            <person name="Sugimoto M."/>
            <person name="Takeuchi C."/>
            <person name="Yamada M."/>
            <person name="Tabata S."/>
        </authorList>
    </citation>
    <scope>NUCLEOTIDE SEQUENCE [LARGE SCALE GENOMIC DNA]</scope>
    <source>
        <strain>NIES-2133 / IAM M-273 / BP-1</strain>
    </source>
</reference>
<comment type="function">
    <text evidence="1">NDH-1 shuttles electrons from an unknown electron donor, via FMN and iron-sulfur (Fe-S) centers, to quinones in the respiratory and/or the photosynthetic chain. The immediate electron acceptor for the enzyme in this species is believed to be plastoquinone. Couples the redox reaction to proton translocation, and thus conserves the redox energy in a proton gradient.</text>
</comment>
<comment type="catalytic activity">
    <reaction evidence="1">
        <text>a plastoquinone + NADH + (n+1) H(+)(in) = a plastoquinol + NAD(+) + n H(+)(out)</text>
        <dbReference type="Rhea" id="RHEA:42608"/>
        <dbReference type="Rhea" id="RHEA-COMP:9561"/>
        <dbReference type="Rhea" id="RHEA-COMP:9562"/>
        <dbReference type="ChEBI" id="CHEBI:15378"/>
        <dbReference type="ChEBI" id="CHEBI:17757"/>
        <dbReference type="ChEBI" id="CHEBI:57540"/>
        <dbReference type="ChEBI" id="CHEBI:57945"/>
        <dbReference type="ChEBI" id="CHEBI:62192"/>
    </reaction>
</comment>
<comment type="catalytic activity">
    <reaction evidence="1">
        <text>a plastoquinone + NADPH + (n+1) H(+)(in) = a plastoquinol + NADP(+) + n H(+)(out)</text>
        <dbReference type="Rhea" id="RHEA:42612"/>
        <dbReference type="Rhea" id="RHEA-COMP:9561"/>
        <dbReference type="Rhea" id="RHEA-COMP:9562"/>
        <dbReference type="ChEBI" id="CHEBI:15378"/>
        <dbReference type="ChEBI" id="CHEBI:17757"/>
        <dbReference type="ChEBI" id="CHEBI:57783"/>
        <dbReference type="ChEBI" id="CHEBI:58349"/>
        <dbReference type="ChEBI" id="CHEBI:62192"/>
    </reaction>
</comment>
<comment type="cofactor">
    <cofactor evidence="1">
        <name>[4Fe-4S] cluster</name>
        <dbReference type="ChEBI" id="CHEBI:49883"/>
    </cofactor>
    <text evidence="1">Binds 2 [4Fe-4S] clusters per subunit.</text>
</comment>
<comment type="subunit">
    <text evidence="1">NDH-1 is composed of at least 11 different subunits.</text>
</comment>
<comment type="subcellular location">
    <subcellularLocation>
        <location evidence="1">Cellular thylakoid membrane</location>
        <topology evidence="1">Peripheral membrane protein</topology>
    </subcellularLocation>
</comment>
<comment type="similarity">
    <text evidence="1">Belongs to the complex I 23 kDa subunit family.</text>
</comment>
<evidence type="ECO:0000255" key="1">
    <source>
        <dbReference type="HAMAP-Rule" id="MF_01351"/>
    </source>
</evidence>
<evidence type="ECO:0000256" key="2">
    <source>
        <dbReference type="SAM" id="MobiDB-lite"/>
    </source>
</evidence>
<evidence type="ECO:0007829" key="3">
    <source>
        <dbReference type="PDB" id="6KHI"/>
    </source>
</evidence>
<evidence type="ECO:0007829" key="4">
    <source>
        <dbReference type="PDB" id="6KHJ"/>
    </source>
</evidence>
<evidence type="ECO:0007829" key="5">
    <source>
        <dbReference type="PDB" id="6NBQ"/>
    </source>
</evidence>
<evidence type="ECO:0007829" key="6">
    <source>
        <dbReference type="PDB" id="6NBY"/>
    </source>
</evidence>
<name>NDHI_THEVB</name>
<gene>
    <name evidence="1" type="primary">ndhI</name>
    <name type="ordered locus">tlr0668</name>
</gene>
<accession>Q8DL31</accession>
<organism>
    <name type="scientific">Thermosynechococcus vestitus (strain NIES-2133 / IAM M-273 / BP-1)</name>
    <dbReference type="NCBI Taxonomy" id="197221"/>
    <lineage>
        <taxon>Bacteria</taxon>
        <taxon>Bacillati</taxon>
        <taxon>Cyanobacteriota</taxon>
        <taxon>Cyanophyceae</taxon>
        <taxon>Acaryochloridales</taxon>
        <taxon>Thermosynechococcaceae</taxon>
        <taxon>Thermosynechococcus</taxon>
    </lineage>
</organism>